<accession>P83476</accession>
<sequence>YCQKWMWTCDSERKCCEGMVCRLWCKKKLW</sequence>
<evidence type="ECO:0000269" key="1">
    <source>
    </source>
</evidence>
<evidence type="ECO:0000269" key="2">
    <source>
    </source>
</evidence>
<evidence type="ECO:0000269" key="3">
    <source>
    </source>
</evidence>
<evidence type="ECO:0000269" key="4">
    <source>
    </source>
</evidence>
<evidence type="ECO:0000269" key="5">
    <source>
    </source>
</evidence>
<evidence type="ECO:0000269" key="6">
    <source>
    </source>
</evidence>
<evidence type="ECO:0000269" key="7">
    <source>
    </source>
</evidence>
<evidence type="ECO:0000269" key="8">
    <source>
    </source>
</evidence>
<evidence type="ECO:0000269" key="9">
    <source>
    </source>
</evidence>
<evidence type="ECO:0000269" key="10">
    <source>
    </source>
</evidence>
<evidence type="ECO:0000269" key="11">
    <source>
    </source>
</evidence>
<evidence type="ECO:0000269" key="12">
    <source>
    </source>
</evidence>
<evidence type="ECO:0000269" key="13">
    <source>
    </source>
</evidence>
<evidence type="ECO:0000269" key="14">
    <source>
    </source>
</evidence>
<evidence type="ECO:0000269" key="15">
    <source>
    </source>
</evidence>
<evidence type="ECO:0000269" key="16">
    <source>
    </source>
</evidence>
<evidence type="ECO:0000269" key="17">
    <source>
    </source>
</evidence>
<evidence type="ECO:0000303" key="18">
    <source>
    </source>
</evidence>
<evidence type="ECO:0000303" key="19">
    <source>
    </source>
</evidence>
<evidence type="ECO:0000303" key="20">
    <source>
    </source>
</evidence>
<evidence type="ECO:0000305" key="21"/>
<evidence type="ECO:0000305" key="22">
    <source>
    </source>
</evidence>
<evidence type="ECO:0000305" key="23">
    <source>
    </source>
</evidence>
<evidence type="ECO:0000305" key="24">
    <source>
    </source>
</evidence>
<evidence type="ECO:0000312" key="25">
    <source>
        <dbReference type="PDB" id="2N9T"/>
    </source>
</evidence>
<evidence type="ECO:0000312" key="26">
    <source>
        <dbReference type="PDB" id="5O0U"/>
    </source>
</evidence>
<evidence type="ECO:0000312" key="27">
    <source>
        <dbReference type="PDB" id="5TCZ"/>
    </source>
</evidence>
<evidence type="ECO:0000312" key="28">
    <source>
        <dbReference type="PDB" id="6N4I"/>
    </source>
</evidence>
<evidence type="ECO:0000312" key="29">
    <source>
        <dbReference type="PDB" id="6N4Q"/>
    </source>
</evidence>
<evidence type="ECO:0000312" key="30">
    <source>
        <dbReference type="PDB" id="6N4R"/>
    </source>
</evidence>
<evidence type="ECO:0007829" key="31">
    <source>
        <dbReference type="PDB" id="2N9T"/>
    </source>
</evidence>
<evidence type="ECO:0007829" key="32">
    <source>
        <dbReference type="PDB" id="5O0U"/>
    </source>
</evidence>
<protein>
    <recommendedName>
        <fullName evidence="21">Beta/omega-theraphotoxin-Tp2a</fullName>
        <shortName evidence="21">Beta/omega-TRTX-Tp2a</shortName>
    </recommendedName>
    <alternativeName>
        <fullName evidence="21">Protoxin-2</fullName>
        <shortName evidence="21">ProTx-2</shortName>
        <shortName evidence="20">ProTx2</shortName>
    </alternativeName>
    <alternativeName>
        <fullName evidence="20">Protoxin-II</fullName>
        <shortName evidence="19">PT-II</shortName>
        <shortName evidence="18 19">ProTx-II</shortName>
    </alternativeName>
</protein>
<proteinExistence type="evidence at protein level"/>
<name>TXPR2_THRPR</name>
<organism>
    <name type="scientific">Thrixopelma pruriens</name>
    <name type="common">Peruvian green velvet tarantula</name>
    <dbReference type="NCBI Taxonomy" id="213387"/>
    <lineage>
        <taxon>Eukaryota</taxon>
        <taxon>Metazoa</taxon>
        <taxon>Ecdysozoa</taxon>
        <taxon>Arthropoda</taxon>
        <taxon>Chelicerata</taxon>
        <taxon>Arachnida</taxon>
        <taxon>Araneae</taxon>
        <taxon>Mygalomorphae</taxon>
        <taxon>Theraphosidae</taxon>
        <taxon>Thrixopelma</taxon>
    </lineage>
</organism>
<dbReference type="PDB" id="2N9T">
    <property type="method" value="NMR"/>
    <property type="chains" value="A=1-30"/>
</dbReference>
<dbReference type="PDB" id="5O0U">
    <property type="method" value="X-ray"/>
    <property type="resolution" value="0.99 A"/>
    <property type="chains" value="A=1-30"/>
</dbReference>
<dbReference type="PDB" id="5TCZ">
    <property type="method" value="NMR"/>
    <property type="chains" value="A=1-29"/>
</dbReference>
<dbReference type="PDB" id="6MK4">
    <property type="method" value="NMR"/>
    <property type="chains" value="A=1-30"/>
</dbReference>
<dbReference type="PDB" id="6N4I">
    <property type="method" value="X-ray"/>
    <property type="resolution" value="3.54 A"/>
    <property type="chains" value="E/F/G/H=1-30"/>
</dbReference>
<dbReference type="PDB" id="6N4Q">
    <property type="method" value="EM"/>
    <property type="resolution" value="3.60 A"/>
    <property type="chains" value="E/F/G/H=1-30"/>
</dbReference>
<dbReference type="PDB" id="6N4R">
    <property type="method" value="EM"/>
    <property type="resolution" value="4.20 A"/>
    <property type="chains" value="E/F/G/H=1-30"/>
</dbReference>
<dbReference type="PDBsum" id="2N9T"/>
<dbReference type="PDBsum" id="5O0U"/>
<dbReference type="PDBsum" id="5TCZ"/>
<dbReference type="PDBsum" id="6MK4"/>
<dbReference type="PDBsum" id="6N4I"/>
<dbReference type="PDBsum" id="6N4Q"/>
<dbReference type="PDBsum" id="6N4R"/>
<dbReference type="BMRB" id="P83476"/>
<dbReference type="EMDB" id="EMD-0341"/>
<dbReference type="EMDB" id="EMD-0342"/>
<dbReference type="SMR" id="P83476"/>
<dbReference type="TCDB" id="8.B.5.2.1">
    <property type="family name" value="the na(+)/k(+)/ca(2+) channel targeting tarantula huwentoxin (tht) family"/>
</dbReference>
<dbReference type="ArachnoServer" id="AS000414">
    <property type="toxin name" value="beta/omega-theraphotoxin-Tp2a"/>
</dbReference>
<dbReference type="GO" id="GO:0005576">
    <property type="term" value="C:extracellular region"/>
    <property type="evidence" value="ECO:0007669"/>
    <property type="project" value="UniProtKB-SubCell"/>
</dbReference>
<dbReference type="GO" id="GO:0005246">
    <property type="term" value="F:calcium channel regulator activity"/>
    <property type="evidence" value="ECO:0007669"/>
    <property type="project" value="UniProtKB-KW"/>
</dbReference>
<dbReference type="GO" id="GO:0008289">
    <property type="term" value="F:lipid binding"/>
    <property type="evidence" value="ECO:0007669"/>
    <property type="project" value="UniProtKB-KW"/>
</dbReference>
<dbReference type="GO" id="GO:0017080">
    <property type="term" value="F:sodium channel regulator activity"/>
    <property type="evidence" value="ECO:0007669"/>
    <property type="project" value="UniProtKB-KW"/>
</dbReference>
<dbReference type="GO" id="GO:0090729">
    <property type="term" value="F:toxin activity"/>
    <property type="evidence" value="ECO:0007669"/>
    <property type="project" value="UniProtKB-KW"/>
</dbReference>
<dbReference type="SUPFAM" id="SSF57059">
    <property type="entry name" value="omega toxin-like"/>
    <property type="match status" value="1"/>
</dbReference>
<reference key="1">
    <citation type="journal article" date="2002" name="Biochemistry">
        <title>Two tarantula peptides inhibit activation of multiple sodium channels.</title>
        <authorList>
            <person name="Middleton R.E."/>
            <person name="Warren V.A."/>
            <person name="Kraus R.L."/>
            <person name="Hwang J.C."/>
            <person name="Liu C.J."/>
            <person name="Dai G."/>
            <person name="Brochu R.M."/>
            <person name="Kohler M.G."/>
            <person name="Gao Y.-D."/>
            <person name="Garsky V.M."/>
            <person name="Bogusky M.J."/>
            <person name="Mehl J.T."/>
            <person name="Cohen C.J."/>
            <person name="Smith M.M."/>
        </authorList>
    </citation>
    <scope>PROTEIN SEQUENCE</scope>
    <scope>SYNTHESIS</scope>
    <scope>FUNCTION</scope>
    <scope>SUBCELLULAR LOCATION</scope>
    <scope>MASS SPECTROMETRY</scope>
    <scope>DISULFIDE BONDS</scope>
    <source>
        <tissue>Venom</tissue>
    </source>
</reference>
<reference key="2">
    <citation type="journal article" date="2005" name="J. Biol. Chem.">
        <title>Differential phospholipid binding by site 3 and site 4 toxins. Implications for structural variability between voltage-sensitive sodium channel domains.</title>
        <authorList>
            <person name="Smith J.J."/>
            <person name="Alphy S."/>
            <person name="Seibert A.L."/>
            <person name="Blumenthal K.M."/>
        </authorList>
    </citation>
    <scope>FUNCTION</scope>
</reference>
<reference key="3">
    <citation type="journal article" date="2007" name="J. Biol. Chem.">
        <title>Molecular interactions of the gating modifier toxin ProTx-II with NaV 1.5: implied existence of a novel toxin binding site coupled to activation.</title>
        <authorList>
            <person name="Smith J.J."/>
            <person name="Cummins T.R."/>
            <person name="Alphy S."/>
            <person name="Blumenthal K.M."/>
        </authorList>
    </citation>
    <scope>FUNCTION</scope>
</reference>
<reference key="4">
    <citation type="journal article" date="2007" name="Toxicon">
        <title>ProTx-I and ProTx-II: gating modifiers of voltage-gated sodium channels.</title>
        <authorList>
            <person name="Priest B.T."/>
            <person name="Blumenthal K.M."/>
            <person name="Smith J.J."/>
            <person name="Warren V.A."/>
            <person name="Smith M.M."/>
        </authorList>
    </citation>
    <scope>FUNCTION</scope>
    <scope>SYNTHESIS</scope>
    <scope>MUTAGENESIS OF TYR-1; GLN-3; TRP-5; MET-6; TRP-7; THR-8; ASP-10; SER-11; GLU-12; LEU-23 AND TRP-24</scope>
</reference>
<reference key="5">
    <citation type="journal article" date="2008" name="Mol. Pharmacol.">
        <title>Inhibition of sodium channel gating by trapping the domain II voltage sensor with protoxin II.</title>
        <authorList>
            <person name="Sokolov S."/>
            <person name="Kraus R.L."/>
            <person name="Scheuer T."/>
            <person name="Catterall W.A."/>
        </authorList>
    </citation>
    <scope>FUNCTION</scope>
</reference>
<reference key="6">
    <citation type="journal article" date="2008" name="Mol. Pharmacol.">
        <title>ProTx-II, a selective inhibitor of NaV1.7 sodium channels, blocks action potential propagation in nociceptors.</title>
        <authorList>
            <person name="Schmalhofer W.A."/>
            <person name="Calhoun J."/>
            <person name="Burrows R."/>
            <person name="Bailey T."/>
            <person name="Kohler M.G."/>
            <person name="Weinglass A.B."/>
            <person name="Kaczorowski G.J."/>
            <person name="Garcia M.L."/>
            <person name="Koltzenburg M."/>
            <person name="Priest B.T."/>
        </authorList>
    </citation>
    <scope>FUNCTION</scope>
</reference>
<reference key="7">
    <citation type="journal article" date="2008" name="Toxicon">
        <title>Evidence for multiple effects of ProTxII on activation gating in Na(V)1.5.</title>
        <authorList>
            <person name="Edgerton G.B."/>
            <person name="Blumenthal K.M."/>
            <person name="Hanck D.A."/>
        </authorList>
    </citation>
    <scope>FUNCTION</scope>
</reference>
<reference key="8">
    <citation type="journal article" date="2010" name="Mol. Pharmacol.">
        <title>The tarantula toxins ProTx-II and huwentoxin-IV differentially interact with human Nav1.7 voltage sensors to inhibit channel activation and inactivation.</title>
        <authorList>
            <person name="Xiao Y."/>
            <person name="Blumenthal K."/>
            <person name="Jackson J.O. II"/>
            <person name="Liang S."/>
            <person name="Cummins T.R."/>
        </authorList>
    </citation>
    <scope>FUNCTION</scope>
</reference>
<reference key="9">
    <citation type="journal article" date="2010" name="Toxicon">
        <title>Inhibition of the activation pathway of the T-type calcium channel Ca(V)3.1 by ProTxII.</title>
        <authorList>
            <person name="Edgerton G.B."/>
            <person name="Blumenthal K.M."/>
            <person name="Hanck D.A."/>
        </authorList>
    </citation>
    <scope>FUNCTION ON CAV3.1 CALCIUM CHANNEL</scope>
</reference>
<reference key="10">
    <citation type="journal article" date="2013" name="Proc. Natl. Acad. Sci. U.S.A.">
        <title>Crystallographic insights into sodium-channel modulation by the beta4 subunit.</title>
        <authorList>
            <person name="Gilchrist J."/>
            <person name="Das S."/>
            <person name="Van Petegem F."/>
            <person name="Bosmans F."/>
        </authorList>
    </citation>
    <scope>FUNCTION</scope>
</reference>
<reference key="11">
    <citation type="journal article" date="2014" name="Mol. Brain">
        <title>Block of T-type calcium channels by protoxins I and II.</title>
        <authorList>
            <person name="Bladen C."/>
            <person name="Hamid J."/>
            <person name="Souza I.A."/>
            <person name="Zamponi G.W."/>
        </authorList>
    </citation>
    <scope>FUNCTION</scope>
</reference>
<reference key="12">
    <citation type="journal article" date="2015" name="Int. J. Pept.">
        <title>High proteolytic resistance of spider-derived inhibitor cystine knots.</title>
        <authorList>
            <person name="Kikuchi K."/>
            <person name="Sugiura M."/>
            <person name="Kimura T."/>
        </authorList>
    </citation>
    <scope>DOMAIN</scope>
</reference>
<reference key="13">
    <citation type="journal article" date="2015" name="J. Med. Chem.">
        <title>Engineering potent and selective analogues of GpTx-1, a tarantula venom peptide antagonist of the Na(V)1.7 sodium channel.</title>
        <authorList>
            <person name="Murray J.K."/>
            <person name="Ligutti J."/>
            <person name="Liu D."/>
            <person name="Zou A."/>
            <person name="Poppe L."/>
            <person name="Li H."/>
            <person name="Andrews K.L."/>
            <person name="Moyer B.D."/>
            <person name="McDonough S.I."/>
            <person name="Favreau P."/>
            <person name="Stoecklin R."/>
            <person name="Miranda L.P."/>
        </authorList>
    </citation>
    <scope>FUNCTION</scope>
</reference>
<reference key="14">
    <citation type="journal article" date="2016" name="Elife">
        <title>Binary architecture of the Nav1.2-beta2 signaling complex.</title>
        <authorList>
            <person name="Das S."/>
            <person name="Gilchrist J."/>
            <person name="Bosmans F."/>
            <person name="Van Petegem F."/>
        </authorList>
    </citation>
    <scope>FUNCTION</scope>
</reference>
<reference key="15">
    <citation type="journal article" date="2017" name="Sci. Rep.">
        <title>Insensitivity to pain induced by a potent selective closed-state Nav1.7 inhibitor.</title>
        <authorList>
            <person name="Flinspach M."/>
            <person name="Xu Q."/>
            <person name="Piekarz A.D."/>
            <person name="Fellows R."/>
            <person name="Hagan R."/>
            <person name="Gibbs A."/>
            <person name="Liu Y."/>
            <person name="Neff R.A."/>
            <person name="Freedman J."/>
            <person name="Eckert W.A."/>
            <person name="Zhou M."/>
            <person name="Bonesteel R."/>
            <person name="Pennington M.W."/>
            <person name="Eddinger K.A."/>
            <person name="Yaksh T.L."/>
            <person name="Hunter M."/>
            <person name="Swanson R.V."/>
            <person name="Wickenden A.D."/>
        </authorList>
    </citation>
    <scope>PHARMACEUTICAL</scope>
    <scope>MUTAGENESIS OF TYR-1; TRP-7 AND TRP-30</scope>
</reference>
<reference key="16">
    <citation type="journal article" date="2019" name="Toxins">
        <title>Chemical synthesis, proper folding, Nav channel selectivity profile and analgesic properties of the spider peptide Phlotoxin 1.</title>
        <authorList>
            <person name="Nicolas S."/>
            <person name="Zoukimian C."/>
            <person name="Bosmans F."/>
            <person name="Montnach J."/>
            <person name="Diochot S."/>
            <person name="Cuypers E."/>
            <person name="De Waard S."/>
            <person name="Beroud R."/>
            <person name="Mebs D."/>
            <person name="Craik D."/>
            <person name="Boturyn D."/>
            <person name="Lazdunski M."/>
            <person name="Tytgat J."/>
            <person name="De Waard M."/>
        </authorList>
    </citation>
    <scope>FUNCTION ON NAV1.7/SCN9A</scope>
    <scope>SYNTHESIS</scope>
</reference>
<reference key="17">
    <citation type="journal article" date="2014" name="J. Med. Chem.">
        <title>Studies examining the relationship between the chemical structure of protoxin II and its activity on voltage gated sodium channels.</title>
        <authorList>
            <person name="Park J.H."/>
            <person name="Carlin K.P."/>
            <person name="Wu G."/>
            <person name="Ilyin V.I."/>
            <person name="Musza L.L."/>
            <person name="Blake P.R."/>
            <person name="Kyle D.J."/>
        </authorList>
    </citation>
    <scope>STRUCTURE BY NMR</scope>
    <scope>FUNCTION</scope>
    <scope>MUTAGENESIS OF GLU-12 AND MET-19</scope>
</reference>
<reference evidence="25" key="18">
    <citation type="journal article" date="2016" name="J. Biol. Chem.">
        <title>Interaction of tarantula venom peptide ProTx-II with lipid membranes is a prerequisite for its inhibition of human voltage-gated sodium channel Nav1.7.</title>
        <authorList>
            <person name="Henriques S.T."/>
            <person name="Deplazes E."/>
            <person name="Lawrence N."/>
            <person name="Cheneval O."/>
            <person name="Chaousis S."/>
            <person name="Inserra M."/>
            <person name="Thongyoo P."/>
            <person name="King G.F."/>
            <person name="Mark A.E."/>
            <person name="Vetter I."/>
            <person name="Craik D.J."/>
            <person name="Schroeder C.I."/>
        </authorList>
    </citation>
    <scope>STRUCTURE BY NMR</scope>
    <scope>DISULFIDE BOND</scope>
    <scope>SYNTHESIS</scope>
    <scope>MUTAGENESIS OF LYS-4; TRP-5; TRP-7; LYS-14; GLU-17; TRP-24; LYS-26; LYS-27; LYS-28 AND TRP-30</scope>
</reference>
<reference evidence="28 29 30" key="19">
    <citation type="journal article" date="2019" name="Cell">
        <title>Structural basis of Nav1.7 inhibition by a gating-modifier spider toxin.</title>
        <authorList>
            <person name="Xu H."/>
            <person name="Li T."/>
            <person name="Rohou A."/>
            <person name="Arthur C.P."/>
            <person name="Tzakoniati F."/>
            <person name="Wong E."/>
            <person name="Estevez A."/>
            <person name="Kugel C."/>
            <person name="Franke Y."/>
            <person name="Chen J."/>
            <person name="Ciferri C."/>
            <person name="Hackos D.H."/>
            <person name="Koth C.M."/>
            <person name="Payandeh J."/>
        </authorList>
    </citation>
    <scope>X-RAY CRYSTALLOGRAPHY (3.54 ANGSTROMS) IN COMPLEX WITH VOLTAGE-SENSING DOMAIN OF HUMAN NAV1.7 (SCN9A) IN A MEMBRANE-LIKE ENVIRONMENT</scope>
    <scope>STRUCTURE BY ELECTRON MICROSCOPY (3.60 ANGSTROMS)</scope>
    <scope>MUTAGENESIS OF ARG-22 AND LYS-26</scope>
    <scope>DISULFIDE BOND</scope>
</reference>
<reference key="20">
    <citation type="journal article" date="2019" name="Science">
        <title>Structures of human Nav1.7 channel in complex with auxiliary subunits and animal toxins.</title>
        <authorList>
            <person name="Shen H."/>
            <person name="Liu D."/>
            <person name="Wu K."/>
            <person name="Lei J."/>
            <person name="Yan N."/>
        </authorList>
    </citation>
    <scope>STRUCTURE BY ELECTRON MICROSCOPY (3.2 ANGSTROMS) IN COMPLEX WITH SCN9A; SCN1B AND SCN2B</scope>
    <scope>FUNCTION</scope>
</reference>
<feature type="peptide" id="PRO_0000044556" description="Beta/omega-theraphotoxin-Tp2a" evidence="1">
    <location>
        <begin position="1"/>
        <end position="30"/>
    </location>
</feature>
<feature type="region of interest" description="Flexible tail region important for ability to inhibit Nav channel" evidence="23">
    <location>
        <begin position="26"/>
        <end position="30"/>
    </location>
</feature>
<feature type="region of interest" description="Hydrophobic dyad that anchors the toxin into the membrane while positioning it over the S3 helix of Nav1.7/SCN9A" evidence="24">
    <location>
        <begin position="29"/>
        <end position="30"/>
    </location>
</feature>
<feature type="site" description="Part of an aromatic-rich surface that anchors the toxin toward the membrane core relative to lipid headgroups bound along the pore module of Nav1.7/SCN9A" evidence="24">
    <location>
        <position position="5"/>
    </location>
</feature>
<feature type="site" description="Part of an aromatic-rich surface that anchors the toxin toward the membrane core relative to lipid headgroups bound along the pore module of Nav1.7/SCN9A" evidence="24">
    <location>
        <position position="7"/>
    </location>
</feature>
<feature type="site" description="Electrostatic gating-modifier of Nav1.7/SCN9A that antagonizes outward gating-charge movement through direct electrostatic repulsion; may also indirectly antagonize S4 gating-charge movement by neutralizing acidic side chains within the extracellular vestibule of VSD2" evidence="24">
    <location>
        <position position="22"/>
    </location>
</feature>
<feature type="site" description="Part of an aromatic-rich surface that anchors the toxin toward the membrane core relative to lipid headgroups bound along the pore module of Nav1.7/SCN9A; it also stabilizes the toxin for productive receptor site engagement" evidence="24">
    <location>
        <position position="24"/>
    </location>
</feature>
<feature type="site" description="Antagonizes outward gating-charge movement of Nav1.7/SCN9A through direct electrostatic repulsion; may also indirectly antagonize S4 gating-charge movement by neutralizing acidic side chains within the extracellular vestibule of VSD2" evidence="24">
    <location>
        <position position="26"/>
    </location>
</feature>
<feature type="site" description="Part of an aromatic-rich surface that anchors the toxin toward the membrane core relative to lipid headgroups bound along the pore module of Nav1.7/SCN9A" evidence="24">
    <location>
        <position position="30"/>
    </location>
</feature>
<feature type="disulfide bond" evidence="1 14 16 25 26 27 28 29 30">
    <location>
        <begin position="2"/>
        <end position="16"/>
    </location>
</feature>
<feature type="disulfide bond" evidence="1 14 16 25 26 27 28 29 30">
    <location>
        <begin position="9"/>
        <end position="21"/>
    </location>
</feature>
<feature type="disulfide bond" evidence="1 14 16 25 26 27 28 29 30">
    <location>
        <begin position="15"/>
        <end position="25"/>
    </location>
</feature>
<feature type="mutagenesis site" description="No change in binding affinity with Nav1.5/SCN5A." evidence="3">
    <original>Y</original>
    <variation>A</variation>
    <location>
        <position position="1"/>
    </location>
</feature>
<feature type="mutagenesis site" description="Important increase in selectivity for Nav1.7/SCN9A; derivative JNJ63955918." evidence="15">
    <original>Y</original>
    <variation>GPY</variation>
    <location>
        <position position="1"/>
    </location>
</feature>
<feature type="mutagenesis site" description="No change in binding affinity with Nav1.5/SCN5A." evidence="3">
    <original>Q</original>
    <variation>A</variation>
    <location>
        <position position="3"/>
    </location>
</feature>
<feature type="mutagenesis site" description="In K/R; 30-fold decrease in ability to inhibit Nav1.7/SCN9A, and change in ability to bind membranes; when associated with R-14; R-26; R-27 and R-28. In K/R,E17K; 110-fold decrease in ability to inhibit Nav1.7/SCN9A, and change in ability to bind membranes; when associated with R-14; K-17; R-26; R-27 and R-28." evidence="14">
    <original>K</original>
    <variation>R</variation>
    <location>
        <position position="4"/>
    </location>
</feature>
<feature type="mutagenesis site" description="At least 10-fold decrease in affinity with Nav1.5/SCN5A." evidence="3">
    <original>W</original>
    <variation>A</variation>
    <location>
        <position position="5"/>
    </location>
</feature>
<feature type="mutagenesis site" description="290-fold decrease in ability to inhibit Nav1.7/SCN9A, and decrease in ability to bind membranes." evidence="14">
    <original>W</original>
    <variation>Y</variation>
    <location>
        <position position="5"/>
    </location>
</feature>
<feature type="mutagenesis site" description="At least 10-fold decrease in affinity with Nav1.5/SCN5A." evidence="3">
    <original>M</original>
    <variation>A</variation>
    <location>
        <position position="6"/>
    </location>
</feature>
<feature type="mutagenesis site" description="At least 10-fold decrease in affinity with Nav1.5/SCN5A." evidence="3">
    <original>W</original>
    <variation>A</variation>
    <location>
        <position position="7"/>
    </location>
</feature>
<feature type="mutagenesis site" description="Important increase in selectivity for Nav1.7/SCN9A; derivative JNJ63955918." evidence="15">
    <original>W</original>
    <variation>Q</variation>
    <location>
        <position position="7"/>
    </location>
</feature>
<feature type="mutagenesis site" description="111-fold decrease in ability to inhibit Nav1.7/SCN9A, and decrease in ability to bind membranes." evidence="14">
    <original>W</original>
    <variation>Y</variation>
    <location>
        <position position="7"/>
    </location>
</feature>
<feature type="mutagenesis site" description="No change in binding affinity with Nav1.5/SCN5A." evidence="3">
    <original>T</original>
    <variation>A</variation>
    <location>
        <position position="8"/>
    </location>
</feature>
<feature type="mutagenesis site" description="No change in binding affinity with Nav1.5/SCN5A." evidence="3">
    <original>D</original>
    <variation>A</variation>
    <location>
        <position position="10"/>
    </location>
</feature>
<feature type="mutagenesis site" description="No change in binding affinity with Nav1.5/SCN5A." evidence="3">
    <original>S</original>
    <variation>A</variation>
    <location>
        <position position="11"/>
    </location>
</feature>
<feature type="mutagenesis site" description="No change in binding affinity with Nav1.5/SCN5A. 5-fold increase in ability to inhibit sodium channel Nav1.7/SCN9A. No change in activity towards Nav1.7/SCN9A; when associated with L-19." evidence="3 10">
    <original>E</original>
    <variation>A</variation>
    <location>
        <position position="12"/>
    </location>
</feature>
<feature type="mutagenesis site" description="In K/R; 30-fold decrease in ability to inhibit Nav1.7/SCN9A, and change in ability to bind membranes; when associated with R-4; R-26; R-27 and R-28. In K/R,E17K; 110-fold decrease in ability to inhibit Nav1.7/SCN9A, and change in ability to bind membranes; when associated with R-4; K-17; R-26; R-27 and R-28." evidence="14">
    <original>K</original>
    <variation>R</variation>
    <location>
        <position position="14"/>
    </location>
</feature>
<feature type="mutagenesis site" description="No change in ability to inhibit Nav1.7/SCN9A, and change in ability to bind membranes. In K/R,E17K; 110-fold decrease in ability to inhibit Nav1.7/SCN9A, and change in ability to bind membranes; when associated with R-4; R-14; R-26; R-27 and R-28." evidence="14">
    <original>E</original>
    <variation>K</variation>
    <location>
        <position position="17"/>
    </location>
</feature>
<feature type="mutagenesis site" description="1.7-fold decrease in ability to inhibit sodium channel Nav1.7/SCN9A. No change in activity towards Nav1.7/SCN9A; when associated with A-12." evidence="10">
    <original>M</original>
    <variation>L</variation>
    <location>
        <position position="19"/>
    </location>
</feature>
<feature type="mutagenesis site" description="Important decrease in ability to inhibit human Nav1.7/SCN9A." evidence="16">
    <original>R</original>
    <variation>D</variation>
    <variation>E</variation>
    <location>
        <position position="22"/>
    </location>
</feature>
<feature type="mutagenesis site" description="Small decrease in ability to inhibit human Nav1.7/SCN9A." evidence="16">
    <original>R</original>
    <variation>K</variation>
    <location>
        <position position="22"/>
    </location>
</feature>
<feature type="mutagenesis site" description="Moderate decrease in ability to inhibit human Nav1.7/SCN9A." evidence="16">
    <original>R</original>
    <variation>Q</variation>
    <location>
        <position position="22"/>
    </location>
</feature>
<feature type="mutagenesis site" description="No change in binding affinity with Nav1.5/SCN5A." evidence="3">
    <original>L</original>
    <variation>A</variation>
    <location>
        <position position="23"/>
    </location>
</feature>
<feature type="mutagenesis site" description="At least 10-fold decrease in affinity with Nav1.5/SCN5A." evidence="3">
    <original>W</original>
    <variation>A</variation>
    <location>
        <position position="24"/>
    </location>
</feature>
<feature type="mutagenesis site" description="180-fold decrease in ability to inhibit Nav1.7/SCN9A, and decrease in ability to bind membranes." evidence="14">
    <original>W</original>
    <variation>Y</variation>
    <location>
        <position position="24"/>
    </location>
</feature>
<feature type="mutagenesis site" description="Important decrease in ability to inhibit human Nav1.7/SCN9A." evidence="16">
    <original>K</original>
    <variation>D</variation>
    <location>
        <position position="26"/>
    </location>
</feature>
<feature type="mutagenesis site" description="Almost complete loss in ability to inhibit human Nav1.7/SCN9A." evidence="16">
    <original>K</original>
    <variation>E</variation>
    <location>
        <position position="26"/>
    </location>
</feature>
<feature type="mutagenesis site" description="Small increase in ability to inhibit human Nav1.7/SCN9A. In K/R; 30-fold decrease in ability to inhibit Nav1.7/SCN9A, and change in ability to bind membranes; when associated with R-4; R-14; R-27 and R-28. In K/R,E17K; 110-fold decrease in ability to inhibit Nav1.7/SCN9A, and change in ability to bind membranes; when associated with R-4; R-14; K-17; R-27 and R-28." evidence="14 16">
    <original>K</original>
    <variation>R</variation>
    <location>
        <position position="26"/>
    </location>
</feature>
<feature type="mutagenesis site" description="In K/R; 30-fold decrease in ability to inhibit Nav1.7/SCN9A, and change in ability to bind membranes; when associated with R-4; R-14; R-26 and R-28. In K/R,E17K; 110-fold decrease in ability to inhibit Nav1.7/SCN9A, and change in ability to bind membranes; when associated with R-4; R-14; K-17; R-26 and R-28." evidence="14">
    <original>K</original>
    <variation>R</variation>
    <location>
        <position position="27"/>
    </location>
</feature>
<feature type="mutagenesis site" description="In K/R; 30-fold decrease in ability to inhibit Nav1.7/SCN9A, and change in ability to bind membranes; when associated with R-4; R-14; R-26 and R-27. In K/R,E17K; 110-fold decrease in ability to inhibit Nav1.7/SCN9A, and change in ability to bind membranes; when associated with R-4; R-14; K-17; R-26 and R-27." evidence="14">
    <original>K</original>
    <variation>R</variation>
    <location>
        <position position="28"/>
    </location>
</feature>
<feature type="mutagenesis site" description="Important increase in selectivity for Nav1.7/SCN9A; derivative JNJ63955918." evidence="15">
    <original>W</original>
    <variation>L</variation>
    <location>
        <position position="30"/>
    </location>
</feature>
<feature type="mutagenesis site" description="6-fold decrease in ability to inhibit Nav1.7/SCN9A, and decrease in ability to bind membranes." evidence="14">
    <original>W</original>
    <variation>Y</variation>
    <location>
        <position position="30"/>
    </location>
</feature>
<feature type="strand" evidence="31">
    <location>
        <begin position="5"/>
        <end position="7"/>
    </location>
</feature>
<feature type="strand" evidence="32">
    <location>
        <begin position="11"/>
        <end position="13"/>
    </location>
</feature>
<feature type="turn" evidence="31">
    <location>
        <begin position="16"/>
        <end position="18"/>
    </location>
</feature>
<feature type="strand" evidence="32">
    <location>
        <begin position="19"/>
        <end position="27"/>
    </location>
</feature>
<keyword id="KW-0002">3D-structure</keyword>
<keyword id="KW-0108">Calcium channel impairing toxin</keyword>
<keyword id="KW-0903">Direct protein sequencing</keyword>
<keyword id="KW-1015">Disulfide bond</keyword>
<keyword id="KW-0872">Ion channel impairing toxin</keyword>
<keyword id="KW-0960">Knottin</keyword>
<keyword id="KW-0446">Lipid-binding</keyword>
<keyword id="KW-0528">Neurotoxin</keyword>
<keyword id="KW-0582">Pharmaceutical</keyword>
<keyword id="KW-0964">Secreted</keyword>
<keyword id="KW-0800">Toxin</keyword>
<keyword id="KW-1218">Voltage-gated calcium channel impairing toxin</keyword>
<keyword id="KW-0738">Voltage-gated sodium channel impairing toxin</keyword>
<comment type="function">
    <text evidence="1 2 3 4 5 6 7 8 9 11 13 14 17">Gating-modifier toxin that targets voltage-gated sodium channels with a selective activity on Nav1.7/SCN9A (IC(50)=1-1.5 nM) (PubMed:25026046, PubMed:31234412). It inhibits both activation and inactivation (PubMed:20855463). For inhibition of activation, it is 100-fold more selective for Nav1.7/SCN9A (IC(50)=0.26-3) than for other sodium channels (Nav1.2/SCN2A (IC(50)=40-540 nM), Nav1.3/SCN3A (IC(50)=102 nM), Nav1.4/SCN4A (IC(50)=30-39 nM), Nav1.5/SCN5A (IC(50)=19-90 nM), Nav1.6/SCN8A (IC(50)=26 nM), and Nav1.8/SCN10A (IC(50)=146 nM)) (PubMed:12475222, PubMed:17087985, PubMed:18156314, PubMed:18728100, PubMed:20855463, PubMed:25658507, PubMed:27311819, PubMed:30661758). For inhibition of inactivation, it is 20-fold more potent in inhibiting inactivation on Nav1.7/SCN9A (IC(50)=250 nM) than other channels (about 4.6 uM for all channels) (PubMed:20855463). It also weakly inhibits Cav1.2/CACNA1C and Cav3.2/CACNA1H (29% block at 1 uM) (PubMed:17087985, PubMed:20600227, PubMed:24886690). It inhibits Nav1.7/SCN9A activation by interacting with DII and impairs Nav1.7/SCN9A inactivation by interacting with DIV (PubMed:20855463). It docks on top of the DII S3 helix Nav1.7/SCN9A (PubMed:30661758, PubMed:30765606). It is about 60-fold less active on Nav1.7/SCN9A at depolarized potential (0 mV; IC(50)=15 nM), compared to -120 mV potential (IC(50)=0.26 nM) (PubMed:30661758). This toxin binds to lipid membrane (PubMed:15632158, PubMed:27311819). This ability correlates with hNav1.7/SCN9A inhibition, showing that membrane binding is the first step in the inhibitory mechanism of this toxin (PubMed:27311819). It inhibits Nav1.2/SCN2A less potently when it is coexpressed with SCN2B or SCN4B than when it is expressed alone, showing that beta subunits (SCN2B and SCN4B) have a protective effect (PubMed:24297919, PubMed:26894959).</text>
</comment>
<comment type="subcellular location">
    <subcellularLocation>
        <location evidence="1">Secreted</location>
    </subcellularLocation>
</comment>
<comment type="tissue specificity">
    <text evidence="22">Expressed by the venom gland.</text>
</comment>
<comment type="domain">
    <text evidence="14">The presence of a 'disulfide through disulfide knot' structurally defines this protein as a knottin.</text>
</comment>
<comment type="mass spectrometry"/>
<comment type="mass spectrometry"/>
<comment type="pharmaceutical">
    <text evidence="15">The derivative JNJ63955918 (Y1GPY; W7Q; W30L) is under preclinical trial by Janssen Pharmaceutica as a non-opioid alternative for the pharmacological treatment of severe pain.</text>
</comment>
<comment type="miscellaneous">
    <text evidence="10">The ability to inhibit Nav1.7/SCN9A is greatly enhances by unatural modifications such as C-terminal amidation (5-fold) or C-terminal addition of -NHCH3 (25-fold). Such modifications also improve the ability to inhibit Nav1.2/SCN2A, but the selectivity for Nav1.7/SCN9A over Nav1.2/SCN2A is retained.</text>
</comment>
<comment type="miscellaneous">
    <text evidence="12">Highly resistant to proteases, such as pepsin, trypsin, chymotrypsin and elastase. The toxin is not degraded in the plasma and shows fast clearance from the circulation.</text>
</comment>
<comment type="miscellaneous">
    <text evidence="1 9">Negative results: does not inhibit Kv1.2/KCNA2, Kv1.3/KCNA3, Kv1.5/KCNA5, and Kv2.1/KCNB1 channels (PubMed:12475222). Weakly inhibits calcium channels hCav3.1/CACNA1G (9% inhibition at 1 uM or 81% at 5 uM) and hCav3.3/CACNA1I (8.9% inhibition at 1 uM) (PubMed:24886690).</text>
</comment>
<comment type="similarity">
    <text evidence="21">Belongs to the neurotoxin 30 (phrixotoxin) family.</text>
</comment>